<evidence type="ECO:0000255" key="1">
    <source>
        <dbReference type="HAMAP-Rule" id="MF_01261"/>
    </source>
</evidence>
<reference key="1">
    <citation type="journal article" date="2009" name="Environ. Microbiol.">
        <title>The genome of Polaromonas naphthalenivorans strain CJ2, isolated from coal tar-contaminated sediment, reveals physiological and metabolic versatility and evolution through extensive horizontal gene transfer.</title>
        <authorList>
            <person name="Yagi J.M."/>
            <person name="Sims D."/>
            <person name="Brettin T."/>
            <person name="Bruce D."/>
            <person name="Madsen E.L."/>
        </authorList>
    </citation>
    <scope>NUCLEOTIDE SEQUENCE [LARGE SCALE GENOMIC DNA]</scope>
    <source>
        <strain>CJ2</strain>
    </source>
</reference>
<organism>
    <name type="scientific">Polaromonas naphthalenivorans (strain CJ2)</name>
    <dbReference type="NCBI Taxonomy" id="365044"/>
    <lineage>
        <taxon>Bacteria</taxon>
        <taxon>Pseudomonadati</taxon>
        <taxon>Pseudomonadota</taxon>
        <taxon>Betaproteobacteria</taxon>
        <taxon>Burkholderiales</taxon>
        <taxon>Comamonadaceae</taxon>
        <taxon>Polaromonas</taxon>
    </lineage>
</organism>
<gene>
    <name evidence="1" type="primary">cca</name>
    <name type="ordered locus">Pnap_3468</name>
</gene>
<keyword id="KW-0067">ATP-binding</keyword>
<keyword id="KW-0378">Hydrolase</keyword>
<keyword id="KW-0460">Magnesium</keyword>
<keyword id="KW-0479">Metal-binding</keyword>
<keyword id="KW-0511">Multifunctional enzyme</keyword>
<keyword id="KW-0533">Nickel</keyword>
<keyword id="KW-0547">Nucleotide-binding</keyword>
<keyword id="KW-0548">Nucleotidyltransferase</keyword>
<keyword id="KW-1185">Reference proteome</keyword>
<keyword id="KW-0692">RNA repair</keyword>
<keyword id="KW-0694">RNA-binding</keyword>
<keyword id="KW-0808">Transferase</keyword>
<keyword id="KW-0819">tRNA processing</keyword>
<protein>
    <recommendedName>
        <fullName evidence="1">Multifunctional CCA protein</fullName>
    </recommendedName>
    <domain>
        <recommendedName>
            <fullName evidence="1">CCA-adding enzyme</fullName>
            <ecNumber evidence="1">2.7.7.72</ecNumber>
        </recommendedName>
        <alternativeName>
            <fullName evidence="1">CCA tRNA nucleotidyltransferase</fullName>
        </alternativeName>
        <alternativeName>
            <fullName evidence="1">tRNA CCA-pyrophosphorylase</fullName>
        </alternativeName>
        <alternativeName>
            <fullName evidence="1">tRNA adenylyl-/cytidylyl-transferase</fullName>
        </alternativeName>
        <alternativeName>
            <fullName evidence="1">tRNA nucleotidyltransferase</fullName>
        </alternativeName>
        <alternativeName>
            <fullName evidence="1">tRNA-NT</fullName>
        </alternativeName>
    </domain>
    <domain>
        <recommendedName>
            <fullName evidence="1">2'-nucleotidase</fullName>
            <ecNumber evidence="1">3.1.3.-</ecNumber>
        </recommendedName>
    </domain>
    <domain>
        <recommendedName>
            <fullName evidence="1">2',3'-cyclic phosphodiesterase</fullName>
            <ecNumber evidence="1">3.1.4.-</ecNumber>
        </recommendedName>
    </domain>
    <domain>
        <recommendedName>
            <fullName evidence="1">Phosphatase</fullName>
            <ecNumber evidence="1">3.1.3.-</ecNumber>
        </recommendedName>
    </domain>
</protein>
<proteinExistence type="inferred from homology"/>
<feature type="chain" id="PRO_1000054278" description="Multifunctional CCA protein">
    <location>
        <begin position="1"/>
        <end position="424"/>
    </location>
</feature>
<feature type="domain" description="HD" evidence="1">
    <location>
        <begin position="238"/>
        <end position="339"/>
    </location>
</feature>
<feature type="binding site" evidence="1">
    <location>
        <position position="8"/>
    </location>
    <ligand>
        <name>ATP</name>
        <dbReference type="ChEBI" id="CHEBI:30616"/>
    </ligand>
</feature>
<feature type="binding site" evidence="1">
    <location>
        <position position="8"/>
    </location>
    <ligand>
        <name>CTP</name>
        <dbReference type="ChEBI" id="CHEBI:37563"/>
    </ligand>
</feature>
<feature type="binding site" evidence="1">
    <location>
        <position position="11"/>
    </location>
    <ligand>
        <name>ATP</name>
        <dbReference type="ChEBI" id="CHEBI:30616"/>
    </ligand>
</feature>
<feature type="binding site" evidence="1">
    <location>
        <position position="11"/>
    </location>
    <ligand>
        <name>CTP</name>
        <dbReference type="ChEBI" id="CHEBI:37563"/>
    </ligand>
</feature>
<feature type="binding site" evidence="1">
    <location>
        <position position="21"/>
    </location>
    <ligand>
        <name>Mg(2+)</name>
        <dbReference type="ChEBI" id="CHEBI:18420"/>
    </ligand>
</feature>
<feature type="binding site" evidence="1">
    <location>
        <position position="23"/>
    </location>
    <ligand>
        <name>Mg(2+)</name>
        <dbReference type="ChEBI" id="CHEBI:18420"/>
    </ligand>
</feature>
<feature type="binding site" evidence="1">
    <location>
        <position position="91"/>
    </location>
    <ligand>
        <name>ATP</name>
        <dbReference type="ChEBI" id="CHEBI:30616"/>
    </ligand>
</feature>
<feature type="binding site" evidence="1">
    <location>
        <position position="91"/>
    </location>
    <ligand>
        <name>CTP</name>
        <dbReference type="ChEBI" id="CHEBI:37563"/>
    </ligand>
</feature>
<feature type="binding site" evidence="1">
    <location>
        <position position="149"/>
    </location>
    <ligand>
        <name>ATP</name>
        <dbReference type="ChEBI" id="CHEBI:30616"/>
    </ligand>
</feature>
<feature type="binding site" evidence="1">
    <location>
        <position position="149"/>
    </location>
    <ligand>
        <name>CTP</name>
        <dbReference type="ChEBI" id="CHEBI:37563"/>
    </ligand>
</feature>
<feature type="binding site" evidence="1">
    <location>
        <position position="152"/>
    </location>
    <ligand>
        <name>ATP</name>
        <dbReference type="ChEBI" id="CHEBI:30616"/>
    </ligand>
</feature>
<feature type="binding site" evidence="1">
    <location>
        <position position="152"/>
    </location>
    <ligand>
        <name>CTP</name>
        <dbReference type="ChEBI" id="CHEBI:37563"/>
    </ligand>
</feature>
<accession>A1VSY7</accession>
<sequence>MKIYMVGGAVRDKLLGLPVTDHDWVVVGATPEALTAQGFLPVGKDFPVFLHPQTREEYALARTERNSARGYRGFEVYAAPEVTLEQDLARRDLTINSIAAPAHPDSAKGLFEPDFDALVDPYGGQRDLQAKVLRHVTDAFREDPVRILRLARFAARFADFSIAPETLAMMWEMVTDGEVDGLVPERVWQELARGLMEDKPSRMFDALRACGALQHLLPEVERLWGVAQSAQYHPEIDTGIHLMMVLDMAAQLGAPLPVRFACLCHDLGKGTTPADVLPRHIGHEERSAKLLKDVCQRLRVPSECREIADVVAREHGNIHRSGEFSPAAVVRLLERCDAFRKPRRFADILLACECDARGRLGFEQTPYPQRPRLLQLLAAAQSVATDKVAAEAMAAGQSGPKIGEWIHQARVEAVRQSAAAAPAP</sequence>
<name>CCA_POLNA</name>
<dbReference type="EC" id="2.7.7.72" evidence="1"/>
<dbReference type="EC" id="3.1.3.-" evidence="1"/>
<dbReference type="EC" id="3.1.4.-" evidence="1"/>
<dbReference type="EMBL" id="CP000529">
    <property type="protein sequence ID" value="ABM38765.1"/>
    <property type="molecule type" value="Genomic_DNA"/>
</dbReference>
<dbReference type="RefSeq" id="WP_011802836.1">
    <property type="nucleotide sequence ID" value="NC_008781.1"/>
</dbReference>
<dbReference type="SMR" id="A1VSY7"/>
<dbReference type="STRING" id="365044.Pnap_3468"/>
<dbReference type="KEGG" id="pna:Pnap_3468"/>
<dbReference type="eggNOG" id="COG0617">
    <property type="taxonomic scope" value="Bacteria"/>
</dbReference>
<dbReference type="HOGENOM" id="CLU_015961_1_1_4"/>
<dbReference type="OrthoDB" id="9805698at2"/>
<dbReference type="Proteomes" id="UP000000644">
    <property type="component" value="Chromosome"/>
</dbReference>
<dbReference type="GO" id="GO:0005524">
    <property type="term" value="F:ATP binding"/>
    <property type="evidence" value="ECO:0007669"/>
    <property type="project" value="UniProtKB-UniRule"/>
</dbReference>
<dbReference type="GO" id="GO:0004810">
    <property type="term" value="F:CCA tRNA nucleotidyltransferase activity"/>
    <property type="evidence" value="ECO:0007669"/>
    <property type="project" value="UniProtKB-UniRule"/>
</dbReference>
<dbReference type="GO" id="GO:0004112">
    <property type="term" value="F:cyclic-nucleotide phosphodiesterase activity"/>
    <property type="evidence" value="ECO:0007669"/>
    <property type="project" value="UniProtKB-UniRule"/>
</dbReference>
<dbReference type="GO" id="GO:0000287">
    <property type="term" value="F:magnesium ion binding"/>
    <property type="evidence" value="ECO:0007669"/>
    <property type="project" value="UniProtKB-UniRule"/>
</dbReference>
<dbReference type="GO" id="GO:0016791">
    <property type="term" value="F:phosphatase activity"/>
    <property type="evidence" value="ECO:0007669"/>
    <property type="project" value="UniProtKB-UniRule"/>
</dbReference>
<dbReference type="GO" id="GO:0000049">
    <property type="term" value="F:tRNA binding"/>
    <property type="evidence" value="ECO:0007669"/>
    <property type="project" value="UniProtKB-UniRule"/>
</dbReference>
<dbReference type="GO" id="GO:0042245">
    <property type="term" value="P:RNA repair"/>
    <property type="evidence" value="ECO:0007669"/>
    <property type="project" value="UniProtKB-KW"/>
</dbReference>
<dbReference type="GO" id="GO:0001680">
    <property type="term" value="P:tRNA 3'-terminal CCA addition"/>
    <property type="evidence" value="ECO:0007669"/>
    <property type="project" value="UniProtKB-UniRule"/>
</dbReference>
<dbReference type="CDD" id="cd00077">
    <property type="entry name" value="HDc"/>
    <property type="match status" value="1"/>
</dbReference>
<dbReference type="CDD" id="cd05398">
    <property type="entry name" value="NT_ClassII-CCAase"/>
    <property type="match status" value="1"/>
</dbReference>
<dbReference type="Gene3D" id="3.30.460.10">
    <property type="entry name" value="Beta Polymerase, domain 2"/>
    <property type="match status" value="1"/>
</dbReference>
<dbReference type="Gene3D" id="1.10.3090.10">
    <property type="entry name" value="cca-adding enzyme, domain 2"/>
    <property type="match status" value="1"/>
</dbReference>
<dbReference type="HAMAP" id="MF_01261">
    <property type="entry name" value="CCA_bact_type1"/>
    <property type="match status" value="1"/>
</dbReference>
<dbReference type="InterPro" id="IPR012006">
    <property type="entry name" value="CCA_bact"/>
</dbReference>
<dbReference type="InterPro" id="IPR003607">
    <property type="entry name" value="HD/PDEase_dom"/>
</dbReference>
<dbReference type="InterPro" id="IPR006674">
    <property type="entry name" value="HD_domain"/>
</dbReference>
<dbReference type="InterPro" id="IPR043519">
    <property type="entry name" value="NT_sf"/>
</dbReference>
<dbReference type="InterPro" id="IPR002646">
    <property type="entry name" value="PolA_pol_head_dom"/>
</dbReference>
<dbReference type="InterPro" id="IPR032828">
    <property type="entry name" value="PolyA_RNA-bd"/>
</dbReference>
<dbReference type="InterPro" id="IPR050124">
    <property type="entry name" value="tRNA_CCA-adding_enzyme"/>
</dbReference>
<dbReference type="NCBIfam" id="NF008137">
    <property type="entry name" value="PRK10885.1"/>
    <property type="match status" value="1"/>
</dbReference>
<dbReference type="PANTHER" id="PTHR47545">
    <property type="entry name" value="MULTIFUNCTIONAL CCA PROTEIN"/>
    <property type="match status" value="1"/>
</dbReference>
<dbReference type="PANTHER" id="PTHR47545:SF1">
    <property type="entry name" value="MULTIFUNCTIONAL CCA PROTEIN"/>
    <property type="match status" value="1"/>
</dbReference>
<dbReference type="Pfam" id="PF01966">
    <property type="entry name" value="HD"/>
    <property type="match status" value="1"/>
</dbReference>
<dbReference type="Pfam" id="PF01743">
    <property type="entry name" value="PolyA_pol"/>
    <property type="match status" value="1"/>
</dbReference>
<dbReference type="Pfam" id="PF12627">
    <property type="entry name" value="PolyA_pol_RNAbd"/>
    <property type="match status" value="1"/>
</dbReference>
<dbReference type="PIRSF" id="PIRSF000813">
    <property type="entry name" value="CCA_bact"/>
    <property type="match status" value="1"/>
</dbReference>
<dbReference type="SUPFAM" id="SSF81301">
    <property type="entry name" value="Nucleotidyltransferase"/>
    <property type="match status" value="1"/>
</dbReference>
<dbReference type="SUPFAM" id="SSF81891">
    <property type="entry name" value="Poly A polymerase C-terminal region-like"/>
    <property type="match status" value="1"/>
</dbReference>
<dbReference type="PROSITE" id="PS51831">
    <property type="entry name" value="HD"/>
    <property type="match status" value="1"/>
</dbReference>
<comment type="function">
    <text evidence="1">Catalyzes the addition and repair of the essential 3'-terminal CCA sequence in tRNAs without using a nucleic acid template. Adds these three nucleotides in the order of C, C, and A to the tRNA nucleotide-73, using CTP and ATP as substrates and producing inorganic pyrophosphate. tRNA 3'-terminal CCA addition is required both for tRNA processing and repair. Also involved in tRNA surveillance by mediating tandem CCA addition to generate a CCACCA at the 3' terminus of unstable tRNAs. While stable tRNAs receive only 3'-terminal CCA, unstable tRNAs are marked with CCACCA and rapidly degraded.</text>
</comment>
<comment type="catalytic activity">
    <reaction evidence="1">
        <text>a tRNA precursor + 2 CTP + ATP = a tRNA with a 3' CCA end + 3 diphosphate</text>
        <dbReference type="Rhea" id="RHEA:14433"/>
        <dbReference type="Rhea" id="RHEA-COMP:10465"/>
        <dbReference type="Rhea" id="RHEA-COMP:10468"/>
        <dbReference type="ChEBI" id="CHEBI:30616"/>
        <dbReference type="ChEBI" id="CHEBI:33019"/>
        <dbReference type="ChEBI" id="CHEBI:37563"/>
        <dbReference type="ChEBI" id="CHEBI:74896"/>
        <dbReference type="ChEBI" id="CHEBI:83071"/>
        <dbReference type="EC" id="2.7.7.72"/>
    </reaction>
</comment>
<comment type="catalytic activity">
    <reaction evidence="1">
        <text>a tRNA with a 3' CCA end + 2 CTP + ATP = a tRNA with a 3' CCACCA end + 3 diphosphate</text>
        <dbReference type="Rhea" id="RHEA:76235"/>
        <dbReference type="Rhea" id="RHEA-COMP:10468"/>
        <dbReference type="Rhea" id="RHEA-COMP:18655"/>
        <dbReference type="ChEBI" id="CHEBI:30616"/>
        <dbReference type="ChEBI" id="CHEBI:33019"/>
        <dbReference type="ChEBI" id="CHEBI:37563"/>
        <dbReference type="ChEBI" id="CHEBI:83071"/>
        <dbReference type="ChEBI" id="CHEBI:195187"/>
    </reaction>
    <physiologicalReaction direction="left-to-right" evidence="1">
        <dbReference type="Rhea" id="RHEA:76236"/>
    </physiologicalReaction>
</comment>
<comment type="cofactor">
    <cofactor evidence="1">
        <name>Mg(2+)</name>
        <dbReference type="ChEBI" id="CHEBI:18420"/>
    </cofactor>
    <text evidence="1">Magnesium is required for nucleotidyltransferase activity.</text>
</comment>
<comment type="cofactor">
    <cofactor evidence="1">
        <name>Ni(2+)</name>
        <dbReference type="ChEBI" id="CHEBI:49786"/>
    </cofactor>
    <text evidence="1">Nickel for phosphatase activity.</text>
</comment>
<comment type="subunit">
    <text evidence="1">Monomer. Can also form homodimers and oligomers.</text>
</comment>
<comment type="domain">
    <text evidence="1">Comprises two domains: an N-terminal domain containing the nucleotidyltransferase activity and a C-terminal HD domain associated with both phosphodiesterase and phosphatase activities.</text>
</comment>
<comment type="miscellaneous">
    <text evidence="1">A single active site specifically recognizes both ATP and CTP and is responsible for their addition.</text>
</comment>
<comment type="similarity">
    <text evidence="1">Belongs to the tRNA nucleotidyltransferase/poly(A) polymerase family. Bacterial CCA-adding enzyme type 1 subfamily.</text>
</comment>